<accession>Q32HG9</accession>
<keyword id="KW-0031">Aminopeptidase</keyword>
<keyword id="KW-0963">Cytoplasm</keyword>
<keyword id="KW-0378">Hydrolase</keyword>
<keyword id="KW-0479">Metal-binding</keyword>
<keyword id="KW-0482">Metalloprotease</keyword>
<keyword id="KW-0645">Protease</keyword>
<keyword id="KW-1185">Reference proteome</keyword>
<keyword id="KW-0862">Zinc</keyword>
<reference key="1">
    <citation type="journal article" date="2005" name="Nucleic Acids Res.">
        <title>Genome dynamics and diversity of Shigella species, the etiologic agents of bacillary dysentery.</title>
        <authorList>
            <person name="Yang F."/>
            <person name="Yang J."/>
            <person name="Zhang X."/>
            <person name="Chen L."/>
            <person name="Jiang Y."/>
            <person name="Yan Y."/>
            <person name="Tang X."/>
            <person name="Wang J."/>
            <person name="Xiong Z."/>
            <person name="Dong J."/>
            <person name="Xue Y."/>
            <person name="Zhu Y."/>
            <person name="Xu X."/>
            <person name="Sun L."/>
            <person name="Chen S."/>
            <person name="Nie H."/>
            <person name="Peng J."/>
            <person name="Xu J."/>
            <person name="Wang Y."/>
            <person name="Yuan Z."/>
            <person name="Wen Y."/>
            <person name="Yao Z."/>
            <person name="Shen Y."/>
            <person name="Qiang B."/>
            <person name="Hou Y."/>
            <person name="Yu J."/>
            <person name="Jin Q."/>
        </authorList>
    </citation>
    <scope>NUCLEOTIDE SEQUENCE [LARGE SCALE GENOMIC DNA]</scope>
    <source>
        <strain>Sd197</strain>
    </source>
</reference>
<proteinExistence type="inferred from homology"/>
<protein>
    <recommendedName>
        <fullName evidence="1">Mlc titration factor A</fullName>
    </recommendedName>
    <alternativeName>
        <fullName evidence="1">Probable zinc metallopeptidase MtfA</fullName>
        <ecNumber evidence="1">3.4.11.-</ecNumber>
    </alternativeName>
</protein>
<organism>
    <name type="scientific">Shigella dysenteriae serotype 1 (strain Sd197)</name>
    <dbReference type="NCBI Taxonomy" id="300267"/>
    <lineage>
        <taxon>Bacteria</taxon>
        <taxon>Pseudomonadati</taxon>
        <taxon>Pseudomonadota</taxon>
        <taxon>Gammaproteobacteria</taxon>
        <taxon>Enterobacterales</taxon>
        <taxon>Enterobacteriaceae</taxon>
        <taxon>Shigella</taxon>
    </lineage>
</organism>
<comment type="function">
    <text evidence="1">Involved in the modulation of the activity of the glucose-phosphotransferase system (glucose-PTS). Interacts with the transcriptional repressor Mlc, preventing its interaction with DNA and leading to the modulation of expression of genes regulated by Mlc, including ptsG, which encodes the PTS system glucose-specific EIICB component.</text>
</comment>
<comment type="function">
    <text evidence="1">Shows zinc-dependent metallopeptidase activity.</text>
</comment>
<comment type="cofactor">
    <cofactor evidence="1">
        <name>Zn(2+)</name>
        <dbReference type="ChEBI" id="CHEBI:29105"/>
    </cofactor>
    <text evidence="1">Binds 1 zinc ion per subunit.</text>
</comment>
<comment type="subunit">
    <text evidence="1">Interacts with Mlc.</text>
</comment>
<comment type="subcellular location">
    <subcellularLocation>
        <location evidence="1">Cytoplasm</location>
    </subcellularLocation>
</comment>
<comment type="similarity">
    <text evidence="1">Belongs to the MtfA family.</text>
</comment>
<comment type="sequence caution" evidence="2">
    <conflict type="erroneous initiation">
        <sequence resource="EMBL-CDS" id="ABB61236"/>
    </conflict>
</comment>
<evidence type="ECO:0000255" key="1">
    <source>
        <dbReference type="HAMAP-Rule" id="MF_01593"/>
    </source>
</evidence>
<evidence type="ECO:0000305" key="2"/>
<dbReference type="EC" id="3.4.11.-" evidence="1"/>
<dbReference type="EMBL" id="CP000034">
    <property type="protein sequence ID" value="ABB61236.1"/>
    <property type="status" value="ALT_INIT"/>
    <property type="molecule type" value="Genomic_DNA"/>
</dbReference>
<dbReference type="RefSeq" id="WP_005023745.1">
    <property type="nucleotide sequence ID" value="NC_007606.1"/>
</dbReference>
<dbReference type="RefSeq" id="YP_402727.1">
    <property type="nucleotide sequence ID" value="NC_007606.1"/>
</dbReference>
<dbReference type="SMR" id="Q32HG9"/>
<dbReference type="STRING" id="300267.SDY_1072"/>
<dbReference type="MEROPS" id="M90.001"/>
<dbReference type="EnsemblBacteria" id="ABB61236">
    <property type="protein sequence ID" value="ABB61236"/>
    <property type="gene ID" value="SDY_1072"/>
</dbReference>
<dbReference type="KEGG" id="sdy:SDY_1072"/>
<dbReference type="PATRIC" id="fig|300267.13.peg.1261"/>
<dbReference type="HOGENOM" id="CLU_063037_0_1_6"/>
<dbReference type="Proteomes" id="UP000002716">
    <property type="component" value="Chromosome"/>
</dbReference>
<dbReference type="GO" id="GO:0005829">
    <property type="term" value="C:cytosol"/>
    <property type="evidence" value="ECO:0007669"/>
    <property type="project" value="TreeGrafter"/>
</dbReference>
<dbReference type="GO" id="GO:0004177">
    <property type="term" value="F:aminopeptidase activity"/>
    <property type="evidence" value="ECO:0007669"/>
    <property type="project" value="UniProtKB-UniRule"/>
</dbReference>
<dbReference type="GO" id="GO:0008237">
    <property type="term" value="F:metallopeptidase activity"/>
    <property type="evidence" value="ECO:0007669"/>
    <property type="project" value="UniProtKB-UniRule"/>
</dbReference>
<dbReference type="GO" id="GO:0008270">
    <property type="term" value="F:zinc ion binding"/>
    <property type="evidence" value="ECO:0007669"/>
    <property type="project" value="UniProtKB-UniRule"/>
</dbReference>
<dbReference type="GO" id="GO:0006508">
    <property type="term" value="P:proteolysis"/>
    <property type="evidence" value="ECO:0007669"/>
    <property type="project" value="UniProtKB-KW"/>
</dbReference>
<dbReference type="CDD" id="cd20169">
    <property type="entry name" value="Peptidase_M90_mtfA"/>
    <property type="match status" value="1"/>
</dbReference>
<dbReference type="FunFam" id="1.10.472.150:FF:000001">
    <property type="entry name" value="Protein MtfA"/>
    <property type="match status" value="1"/>
</dbReference>
<dbReference type="FunFam" id="3.40.390.10:FF:000012">
    <property type="entry name" value="Protein MtfA"/>
    <property type="match status" value="1"/>
</dbReference>
<dbReference type="Gene3D" id="3.40.390.10">
    <property type="entry name" value="Collagenase (Catalytic Domain)"/>
    <property type="match status" value="1"/>
</dbReference>
<dbReference type="Gene3D" id="1.10.472.150">
    <property type="entry name" value="Glucose-regulated metallo-peptidase M90, N-terminal domain"/>
    <property type="match status" value="1"/>
</dbReference>
<dbReference type="HAMAP" id="MF_01593">
    <property type="entry name" value="MtfA"/>
    <property type="match status" value="1"/>
</dbReference>
<dbReference type="InterPro" id="IPR024079">
    <property type="entry name" value="MetalloPept_cat_dom_sf"/>
</dbReference>
<dbReference type="InterPro" id="IPR057256">
    <property type="entry name" value="MtfA_enterob"/>
</dbReference>
<dbReference type="InterPro" id="IPR010384">
    <property type="entry name" value="MtfA_fam"/>
</dbReference>
<dbReference type="InterPro" id="IPR042252">
    <property type="entry name" value="MtfA_N"/>
</dbReference>
<dbReference type="NCBIfam" id="NF011939">
    <property type="entry name" value="PRK15410.1"/>
    <property type="match status" value="1"/>
</dbReference>
<dbReference type="PANTHER" id="PTHR30164">
    <property type="entry name" value="MTFA PEPTIDASE"/>
    <property type="match status" value="1"/>
</dbReference>
<dbReference type="PANTHER" id="PTHR30164:SF2">
    <property type="entry name" value="PROTEIN MTFA"/>
    <property type="match status" value="1"/>
</dbReference>
<dbReference type="Pfam" id="PF06167">
    <property type="entry name" value="Peptidase_M90"/>
    <property type="match status" value="1"/>
</dbReference>
<dbReference type="SUPFAM" id="SSF55486">
    <property type="entry name" value="Metalloproteases ('zincins'), catalytic domain"/>
    <property type="match status" value="1"/>
</dbReference>
<name>MTFA_SHIDS</name>
<sequence>MIKWPQKVQESAHQTALPWQEALSIPLLTCLTEQEQSKLVTLAERFLQQKRLVPLQGFELDSLRSCRIALLFCLPVLELGLEWLDGFHEVLIYPAPFVVDDEWEDDIGLVHNQRIVQSGQSWQQGPIVLNWLDIQDSFDASGFNLIIHEVAHKLDTRNGDRASGVPFIPLREVAGWEHDLHAAMNNIQEEIELVGENAASIDAYAASDPAECFAVLSEYFFSAPELFAPRFPSLWQRFCQFYQQDPLQRLHHANDTDSFSATNVH</sequence>
<feature type="chain" id="PRO_0000316324" description="Mlc titration factor A">
    <location>
        <begin position="1"/>
        <end position="265"/>
    </location>
</feature>
<feature type="binding site" evidence="1">
    <location>
        <position position="111"/>
    </location>
    <ligand>
        <name>Zn(2+)</name>
        <dbReference type="ChEBI" id="CHEBI:29105"/>
    </ligand>
</feature>
<feature type="binding site" evidence="1">
    <location>
        <position position="148"/>
    </location>
    <ligand>
        <name>Zn(2+)</name>
        <dbReference type="ChEBI" id="CHEBI:29105"/>
    </ligand>
</feature>
<feature type="binding site" evidence="1">
    <location>
        <position position="152"/>
    </location>
    <ligand>
        <name>Zn(2+)</name>
        <dbReference type="ChEBI" id="CHEBI:29105"/>
    </ligand>
</feature>
<feature type="binding site" evidence="1">
    <location>
        <position position="211"/>
    </location>
    <ligand>
        <name>Zn(2+)</name>
        <dbReference type="ChEBI" id="CHEBI:29105"/>
    </ligand>
</feature>
<gene>
    <name evidence="1" type="primary">mtfA</name>
    <name type="ordered locus">SDY_1072</name>
</gene>